<evidence type="ECO:0000255" key="1">
    <source>
        <dbReference type="HAMAP-Rule" id="MF_01570"/>
    </source>
</evidence>
<feature type="chain" id="PRO_0000288395" description="Proline--tRNA ligase">
    <location>
        <begin position="1"/>
        <end position="439"/>
    </location>
</feature>
<comment type="function">
    <text evidence="1">Catalyzes the attachment of proline to tRNA(Pro) in a two-step reaction: proline is first activated by ATP to form Pro-AMP and then transferred to the acceptor end of tRNA(Pro).</text>
</comment>
<comment type="catalytic activity">
    <reaction evidence="1">
        <text>tRNA(Pro) + L-proline + ATP = L-prolyl-tRNA(Pro) + AMP + diphosphate</text>
        <dbReference type="Rhea" id="RHEA:14305"/>
        <dbReference type="Rhea" id="RHEA-COMP:9700"/>
        <dbReference type="Rhea" id="RHEA-COMP:9702"/>
        <dbReference type="ChEBI" id="CHEBI:30616"/>
        <dbReference type="ChEBI" id="CHEBI:33019"/>
        <dbReference type="ChEBI" id="CHEBI:60039"/>
        <dbReference type="ChEBI" id="CHEBI:78442"/>
        <dbReference type="ChEBI" id="CHEBI:78532"/>
        <dbReference type="ChEBI" id="CHEBI:456215"/>
        <dbReference type="EC" id="6.1.1.15"/>
    </reaction>
</comment>
<comment type="subunit">
    <text evidence="1">Homodimer.</text>
</comment>
<comment type="subcellular location">
    <subcellularLocation>
        <location evidence="1">Cytoplasm</location>
    </subcellularLocation>
</comment>
<comment type="similarity">
    <text evidence="1">Belongs to the class-II aminoacyl-tRNA synthetase family. ProS type 2 subfamily.</text>
</comment>
<organism>
    <name type="scientific">Hyphomonas neptunium (strain ATCC 15444)</name>
    <dbReference type="NCBI Taxonomy" id="228405"/>
    <lineage>
        <taxon>Bacteria</taxon>
        <taxon>Pseudomonadati</taxon>
        <taxon>Pseudomonadota</taxon>
        <taxon>Alphaproteobacteria</taxon>
        <taxon>Hyphomonadales</taxon>
        <taxon>Hyphomonadaceae</taxon>
        <taxon>Hyphomonas</taxon>
    </lineage>
</organism>
<keyword id="KW-0030">Aminoacyl-tRNA synthetase</keyword>
<keyword id="KW-0067">ATP-binding</keyword>
<keyword id="KW-0963">Cytoplasm</keyword>
<keyword id="KW-0436">Ligase</keyword>
<keyword id="KW-0547">Nucleotide-binding</keyword>
<keyword id="KW-0648">Protein biosynthesis</keyword>
<keyword id="KW-1185">Reference proteome</keyword>
<gene>
    <name evidence="1" type="primary">proS</name>
    <name type="ordered locus">HNE_1764</name>
</gene>
<protein>
    <recommendedName>
        <fullName evidence="1">Proline--tRNA ligase</fullName>
        <ecNumber evidence="1">6.1.1.15</ecNumber>
    </recommendedName>
    <alternativeName>
        <fullName evidence="1">Prolyl-tRNA synthetase</fullName>
        <shortName evidence="1">ProRS</shortName>
    </alternativeName>
</protein>
<sequence>MRLSKFFLPVSKEAPADAAIVSHQLMLRTGMIRQNGAGIYSWLPLGYRVLKRIEQIVREEMNRAGAIEMLMPTLQQADLWRESGRYDDYGKEMLRIKDRHERDMLYGPTNEELITDVFRTYVKSYKQLPLNLYHQQWKFRDEVRPRFGVMRGREFLMKDAYSFDLTEEDARAAYRKMFCAYLNAFDRMGLTAIPMRADTGPIGGDLSHEFIILADTGESAVFCDKALLDLPAPGLDLDFESDLTPFVTERTGYYAATEEMHDEAAFNALPEDRRVSARGIEVGHIFFFGTKYSKPMNAVVQGPDGQMVPVQMGSYGIGVSRLLGAIIEACHDENGIVWPESVAPFDVGLINMRPGNEACDAACNTLYAALTAAGREVLYDETDDRAGAKFARMDLIGLPWQTTVGPRGVTEGKVEVKNRKTGEKHDVKIEDMLAQLKGS</sequence>
<proteinExistence type="inferred from homology"/>
<name>SYP_HYPNA</name>
<dbReference type="EC" id="6.1.1.15" evidence="1"/>
<dbReference type="EMBL" id="CP000158">
    <property type="protein sequence ID" value="ABI77957.1"/>
    <property type="molecule type" value="Genomic_DNA"/>
</dbReference>
<dbReference type="RefSeq" id="WP_011646768.1">
    <property type="nucleotide sequence ID" value="NC_008358.1"/>
</dbReference>
<dbReference type="SMR" id="Q0C1C5"/>
<dbReference type="STRING" id="228405.HNE_1764"/>
<dbReference type="KEGG" id="hne:HNE_1764"/>
<dbReference type="eggNOG" id="COG0442">
    <property type="taxonomic scope" value="Bacteria"/>
</dbReference>
<dbReference type="HOGENOM" id="CLU_016739_4_2_5"/>
<dbReference type="Proteomes" id="UP000001959">
    <property type="component" value="Chromosome"/>
</dbReference>
<dbReference type="GO" id="GO:0005829">
    <property type="term" value="C:cytosol"/>
    <property type="evidence" value="ECO:0007669"/>
    <property type="project" value="TreeGrafter"/>
</dbReference>
<dbReference type="GO" id="GO:0005524">
    <property type="term" value="F:ATP binding"/>
    <property type="evidence" value="ECO:0007669"/>
    <property type="project" value="UniProtKB-UniRule"/>
</dbReference>
<dbReference type="GO" id="GO:0004827">
    <property type="term" value="F:proline-tRNA ligase activity"/>
    <property type="evidence" value="ECO:0007669"/>
    <property type="project" value="UniProtKB-UniRule"/>
</dbReference>
<dbReference type="GO" id="GO:0006433">
    <property type="term" value="P:prolyl-tRNA aminoacylation"/>
    <property type="evidence" value="ECO:0007669"/>
    <property type="project" value="UniProtKB-UniRule"/>
</dbReference>
<dbReference type="CDD" id="cd00861">
    <property type="entry name" value="ProRS_anticodon_short"/>
    <property type="match status" value="1"/>
</dbReference>
<dbReference type="CDD" id="cd00779">
    <property type="entry name" value="ProRS_core_prok"/>
    <property type="match status" value="1"/>
</dbReference>
<dbReference type="FunFam" id="3.30.930.10:FF:000042">
    <property type="entry name" value="probable proline--tRNA ligase, mitochondrial"/>
    <property type="match status" value="1"/>
</dbReference>
<dbReference type="FunFam" id="3.40.50.800:FF:000032">
    <property type="entry name" value="Proline--tRNA ligase"/>
    <property type="match status" value="1"/>
</dbReference>
<dbReference type="Gene3D" id="3.40.50.800">
    <property type="entry name" value="Anticodon-binding domain"/>
    <property type="match status" value="1"/>
</dbReference>
<dbReference type="Gene3D" id="3.30.930.10">
    <property type="entry name" value="Bira Bifunctional Protein, Domain 2"/>
    <property type="match status" value="1"/>
</dbReference>
<dbReference type="HAMAP" id="MF_01570">
    <property type="entry name" value="Pro_tRNA_synth_type2"/>
    <property type="match status" value="1"/>
</dbReference>
<dbReference type="InterPro" id="IPR002314">
    <property type="entry name" value="aa-tRNA-synt_IIb"/>
</dbReference>
<dbReference type="InterPro" id="IPR006195">
    <property type="entry name" value="aa-tRNA-synth_II"/>
</dbReference>
<dbReference type="InterPro" id="IPR045864">
    <property type="entry name" value="aa-tRNA-synth_II/BPL/LPL"/>
</dbReference>
<dbReference type="InterPro" id="IPR004154">
    <property type="entry name" value="Anticodon-bd"/>
</dbReference>
<dbReference type="InterPro" id="IPR036621">
    <property type="entry name" value="Anticodon-bd_dom_sf"/>
</dbReference>
<dbReference type="InterPro" id="IPR002316">
    <property type="entry name" value="Pro-tRNA-ligase_IIa"/>
</dbReference>
<dbReference type="InterPro" id="IPR004500">
    <property type="entry name" value="Pro-tRNA-synth_IIa_bac-type"/>
</dbReference>
<dbReference type="InterPro" id="IPR050062">
    <property type="entry name" value="Pro-tRNA_synthetase"/>
</dbReference>
<dbReference type="InterPro" id="IPR023716">
    <property type="entry name" value="Prolyl-tRNA_ligase_IIa_type2"/>
</dbReference>
<dbReference type="InterPro" id="IPR044140">
    <property type="entry name" value="ProRS_anticodon_short"/>
</dbReference>
<dbReference type="InterPro" id="IPR033730">
    <property type="entry name" value="ProRS_core_prok"/>
</dbReference>
<dbReference type="NCBIfam" id="NF008979">
    <property type="entry name" value="PRK12325.1"/>
    <property type="match status" value="1"/>
</dbReference>
<dbReference type="NCBIfam" id="TIGR00409">
    <property type="entry name" value="proS_fam_II"/>
    <property type="match status" value="1"/>
</dbReference>
<dbReference type="PANTHER" id="PTHR42753">
    <property type="entry name" value="MITOCHONDRIAL RIBOSOME PROTEIN L39/PROLYL-TRNA LIGASE FAMILY MEMBER"/>
    <property type="match status" value="1"/>
</dbReference>
<dbReference type="PANTHER" id="PTHR42753:SF2">
    <property type="entry name" value="PROLINE--TRNA LIGASE"/>
    <property type="match status" value="1"/>
</dbReference>
<dbReference type="Pfam" id="PF03129">
    <property type="entry name" value="HGTP_anticodon"/>
    <property type="match status" value="1"/>
</dbReference>
<dbReference type="Pfam" id="PF00587">
    <property type="entry name" value="tRNA-synt_2b"/>
    <property type="match status" value="1"/>
</dbReference>
<dbReference type="PRINTS" id="PR01046">
    <property type="entry name" value="TRNASYNTHPRO"/>
</dbReference>
<dbReference type="SUPFAM" id="SSF52954">
    <property type="entry name" value="Class II aaRS ABD-related"/>
    <property type="match status" value="1"/>
</dbReference>
<dbReference type="SUPFAM" id="SSF55681">
    <property type="entry name" value="Class II aaRS and biotin synthetases"/>
    <property type="match status" value="1"/>
</dbReference>
<dbReference type="PROSITE" id="PS50862">
    <property type="entry name" value="AA_TRNA_LIGASE_II"/>
    <property type="match status" value="1"/>
</dbReference>
<reference key="1">
    <citation type="journal article" date="2006" name="J. Bacteriol.">
        <title>Comparative genomic evidence for a close relationship between the dimorphic prosthecate bacteria Hyphomonas neptunium and Caulobacter crescentus.</title>
        <authorList>
            <person name="Badger J.H."/>
            <person name="Hoover T.R."/>
            <person name="Brun Y.V."/>
            <person name="Weiner R.M."/>
            <person name="Laub M.T."/>
            <person name="Alexandre G."/>
            <person name="Mrazek J."/>
            <person name="Ren Q."/>
            <person name="Paulsen I.T."/>
            <person name="Nelson K.E."/>
            <person name="Khouri H.M."/>
            <person name="Radune D."/>
            <person name="Sosa J."/>
            <person name="Dodson R.J."/>
            <person name="Sullivan S.A."/>
            <person name="Rosovitz M.J."/>
            <person name="Madupu R."/>
            <person name="Brinkac L.M."/>
            <person name="Durkin A.S."/>
            <person name="Daugherty S.C."/>
            <person name="Kothari S.P."/>
            <person name="Giglio M.G."/>
            <person name="Zhou L."/>
            <person name="Haft D.H."/>
            <person name="Selengut J.D."/>
            <person name="Davidsen T.M."/>
            <person name="Yang Q."/>
            <person name="Zafar N."/>
            <person name="Ward N.L."/>
        </authorList>
    </citation>
    <scope>NUCLEOTIDE SEQUENCE [LARGE SCALE GENOMIC DNA]</scope>
    <source>
        <strain>ATCC 15444</strain>
    </source>
</reference>
<accession>Q0C1C5</accession>